<dbReference type="EC" id="2.1.1.225"/>
<dbReference type="EMBL" id="AE016817">
    <property type="protein sequence ID" value="AAS51757.2"/>
    <property type="molecule type" value="Genomic_DNA"/>
</dbReference>
<dbReference type="RefSeq" id="NP_983933.2">
    <property type="nucleotide sequence ID" value="NM_209286.2"/>
</dbReference>
<dbReference type="FunCoup" id="Q75AT3">
    <property type="interactions" value="488"/>
</dbReference>
<dbReference type="STRING" id="284811.Q75AT3"/>
<dbReference type="EnsemblFungi" id="AAS51757">
    <property type="protein sequence ID" value="AAS51757"/>
    <property type="gene ID" value="AGOS_ADL163W"/>
</dbReference>
<dbReference type="GeneID" id="4620075"/>
<dbReference type="KEGG" id="ago:AGOS_ADL163W"/>
<dbReference type="eggNOG" id="KOG2811">
    <property type="taxonomic scope" value="Eukaryota"/>
</dbReference>
<dbReference type="HOGENOM" id="CLU_027610_1_0_1"/>
<dbReference type="InParanoid" id="Q75AT3"/>
<dbReference type="OMA" id="HRCSWRS"/>
<dbReference type="OrthoDB" id="258806at2759"/>
<dbReference type="Proteomes" id="UP000000591">
    <property type="component" value="Chromosome IV"/>
</dbReference>
<dbReference type="GO" id="GO:0005737">
    <property type="term" value="C:cytoplasm"/>
    <property type="evidence" value="ECO:0007669"/>
    <property type="project" value="UniProtKB-SubCell"/>
</dbReference>
<dbReference type="GO" id="GO:0005730">
    <property type="term" value="C:nucleolus"/>
    <property type="evidence" value="ECO:0007669"/>
    <property type="project" value="UniProtKB-SubCell"/>
</dbReference>
<dbReference type="GO" id="GO:0106050">
    <property type="term" value="F:tRNA 2'-O-methyltransferase activity"/>
    <property type="evidence" value="ECO:0007669"/>
    <property type="project" value="EnsemblFungi"/>
</dbReference>
<dbReference type="GO" id="GO:0008175">
    <property type="term" value="F:tRNA methyltransferase activity"/>
    <property type="evidence" value="ECO:0000318"/>
    <property type="project" value="GO_Central"/>
</dbReference>
<dbReference type="GO" id="GO:0008270">
    <property type="term" value="F:zinc ion binding"/>
    <property type="evidence" value="ECO:0007669"/>
    <property type="project" value="UniProtKB-KW"/>
</dbReference>
<dbReference type="GO" id="GO:0030488">
    <property type="term" value="P:tRNA methylation"/>
    <property type="evidence" value="ECO:0000318"/>
    <property type="project" value="GO_Central"/>
</dbReference>
<dbReference type="GO" id="GO:0002128">
    <property type="term" value="P:tRNA nucleoside ribose methylation"/>
    <property type="evidence" value="ECO:0007669"/>
    <property type="project" value="EnsemblFungi"/>
</dbReference>
<dbReference type="InterPro" id="IPR007871">
    <property type="entry name" value="Methyltransferase_TRM13"/>
</dbReference>
<dbReference type="InterPro" id="IPR039044">
    <property type="entry name" value="Trm13"/>
</dbReference>
<dbReference type="InterPro" id="IPR022776">
    <property type="entry name" value="TRM13/UPF0224_CHHC_Znf_dom"/>
</dbReference>
<dbReference type="InterPro" id="IPR021721">
    <property type="entry name" value="Znf_CCCH-type_TRM13"/>
</dbReference>
<dbReference type="PANTHER" id="PTHR12998">
    <property type="entry name" value="TRNA:M(4)X MODIFICATION ENZYME TRM13 HOMOLOG"/>
    <property type="match status" value="1"/>
</dbReference>
<dbReference type="PANTHER" id="PTHR12998:SF0">
    <property type="entry name" value="TRNA:M(4)X MODIFICATION ENZYME TRM13 HOMOLOG"/>
    <property type="match status" value="1"/>
</dbReference>
<dbReference type="Pfam" id="PF05206">
    <property type="entry name" value="TRM13"/>
    <property type="match status" value="1"/>
</dbReference>
<dbReference type="Pfam" id="PF11722">
    <property type="entry name" value="zf-TRM13_CCCH"/>
    <property type="match status" value="1"/>
</dbReference>
<dbReference type="Pfam" id="PF05253">
    <property type="entry name" value="zf-U11-48K"/>
    <property type="match status" value="1"/>
</dbReference>
<dbReference type="PROSITE" id="PS51800">
    <property type="entry name" value="ZF_CHHC_U11_48K"/>
    <property type="match status" value="1"/>
</dbReference>
<feature type="chain" id="PRO_0000339421" description="tRNA:m(4)X modification enzyme TRM13">
    <location>
        <begin position="1"/>
        <end position="442"/>
    </location>
</feature>
<feature type="zinc finger region" description="CHHC U11-48K-type" evidence="3">
    <location>
        <begin position="58"/>
        <end position="85"/>
    </location>
</feature>
<feature type="region of interest" description="Disordered" evidence="4">
    <location>
        <begin position="1"/>
        <end position="21"/>
    </location>
</feature>
<feature type="binding site" evidence="3">
    <location>
        <position position="61"/>
    </location>
    <ligand>
        <name>Zn(2+)</name>
        <dbReference type="ChEBI" id="CHEBI:29105"/>
    </ligand>
</feature>
<feature type="binding site" evidence="3">
    <location>
        <position position="67"/>
    </location>
    <ligand>
        <name>Zn(2+)</name>
        <dbReference type="ChEBI" id="CHEBI:29105"/>
    </ligand>
</feature>
<feature type="binding site" evidence="3">
    <location>
        <position position="77"/>
    </location>
    <ligand>
        <name>Zn(2+)</name>
        <dbReference type="ChEBI" id="CHEBI:29105"/>
    </ligand>
</feature>
<feature type="binding site" evidence="3">
    <location>
        <position position="81"/>
    </location>
    <ligand>
        <name>Zn(2+)</name>
        <dbReference type="ChEBI" id="CHEBI:29105"/>
    </ligand>
</feature>
<keyword id="KW-0963">Cytoplasm</keyword>
<keyword id="KW-0479">Metal-binding</keyword>
<keyword id="KW-0489">Methyltransferase</keyword>
<keyword id="KW-0539">Nucleus</keyword>
<keyword id="KW-1185">Reference proteome</keyword>
<keyword id="KW-0949">S-adenosyl-L-methionine</keyword>
<keyword id="KW-0808">Transferase</keyword>
<keyword id="KW-0819">tRNA processing</keyword>
<keyword id="KW-0862">Zinc</keyword>
<keyword id="KW-0863">Zinc-finger</keyword>
<accession>Q75AT3</accession>
<sequence>MEASSLVAERPTGGEQDPGHARCAFYLPRKRRSCGMAPKAGARFCAEHQPGDSGTAARVPCPLDPRHTVAKAQLRSHLARCNRTKQDQALRAEREHMPWYEAGVNSAARPAAAAADEATLQAAVMRAIPVLAQIAEAEFRAPLRVAVLSNAQVEHVRFPQLPSNRKHALQQSSLIQHLREAGLWVAPERPVAYVEFGCGRGELSRYINQAAVLEQLERGGPAAPPAFVLVDRACPRMKFDSKFAEDVAELHARFCPSVPPDERPAPAVTRKKIDIRDLRLAALLSPGLEHIAVSKHLCGVATDLTLRCLAAGPRASLCGALIAMCCRHACNPAEYANPAYVEALLARHAPDMSYDLFFLALMKMASWAVSGRRPGVPDTEVGGHFSGLAIAERERLGHLARRLVDEGRRQYFADLGYDAELLVYCERDTSREDIALLVRRPA</sequence>
<comment type="function">
    <text evidence="2">tRNA methylase which 2'-O-methylates cytidine(4) in tRNA(Pro) and tRNA(Gly)(GCC), and adenosine(4) in tRNA(His).</text>
</comment>
<comment type="catalytic activity">
    <reaction evidence="2">
        <text>cytidine(4) in tRNA(Pro) + S-adenosyl-L-methionine = 2'-O-methylcytidine(4) in tRNA(Pro) + S-adenosyl-L-homocysteine + H(+)</text>
        <dbReference type="Rhea" id="RHEA:32767"/>
        <dbReference type="Rhea" id="RHEA-COMP:10397"/>
        <dbReference type="Rhea" id="RHEA-COMP:10398"/>
        <dbReference type="ChEBI" id="CHEBI:15378"/>
        <dbReference type="ChEBI" id="CHEBI:57856"/>
        <dbReference type="ChEBI" id="CHEBI:59789"/>
        <dbReference type="ChEBI" id="CHEBI:74495"/>
        <dbReference type="ChEBI" id="CHEBI:82748"/>
        <dbReference type="EC" id="2.1.1.225"/>
    </reaction>
</comment>
<comment type="catalytic activity">
    <reaction evidence="2">
        <text>cytidine(4) in tRNA(Gly)(GCC) + S-adenosyl-L-methionine = 2'-O-methylcytidine(4) in tRNA(Gly)(GCC) + S-adenosyl-L-homocysteine + H(+)</text>
        <dbReference type="Rhea" id="RHEA:43192"/>
        <dbReference type="Rhea" id="RHEA-COMP:10399"/>
        <dbReference type="Rhea" id="RHEA-COMP:10400"/>
        <dbReference type="ChEBI" id="CHEBI:15378"/>
        <dbReference type="ChEBI" id="CHEBI:57856"/>
        <dbReference type="ChEBI" id="CHEBI:59789"/>
        <dbReference type="ChEBI" id="CHEBI:74495"/>
        <dbReference type="ChEBI" id="CHEBI:82748"/>
        <dbReference type="EC" id="2.1.1.225"/>
    </reaction>
</comment>
<comment type="catalytic activity">
    <reaction evidence="2">
        <text>adenosine(4) in tRNA(His) + S-adenosyl-L-methionine = 2'-O-methyladenosine(4) in tRNA(His) + S-adenosyl-L-homocysteine + H(+)</text>
        <dbReference type="Rhea" id="RHEA:43196"/>
        <dbReference type="Rhea" id="RHEA-COMP:10401"/>
        <dbReference type="Rhea" id="RHEA-COMP:10402"/>
        <dbReference type="ChEBI" id="CHEBI:15378"/>
        <dbReference type="ChEBI" id="CHEBI:57856"/>
        <dbReference type="ChEBI" id="CHEBI:59789"/>
        <dbReference type="ChEBI" id="CHEBI:74411"/>
        <dbReference type="ChEBI" id="CHEBI:74477"/>
        <dbReference type="EC" id="2.1.1.225"/>
    </reaction>
</comment>
<comment type="subcellular location">
    <subcellularLocation>
        <location evidence="1">Cytoplasm</location>
    </subcellularLocation>
    <subcellularLocation>
        <location evidence="1">Nucleus</location>
        <location evidence="1">Nucleolus</location>
    </subcellularLocation>
</comment>
<comment type="similarity">
    <text evidence="5">Belongs to the methyltransferase TRM13 family.</text>
</comment>
<name>TRM13_EREGS</name>
<protein>
    <recommendedName>
        <fullName>tRNA:m(4)X modification enzyme TRM13</fullName>
        <ecNumber>2.1.1.225</ecNumber>
    </recommendedName>
    <alternativeName>
        <fullName>tRNA methylase 13</fullName>
    </alternativeName>
</protein>
<evidence type="ECO:0000250" key="1"/>
<evidence type="ECO:0000250" key="2">
    <source>
        <dbReference type="UniProtKB" id="Q12383"/>
    </source>
</evidence>
<evidence type="ECO:0000255" key="3">
    <source>
        <dbReference type="PROSITE-ProRule" id="PRU01141"/>
    </source>
</evidence>
<evidence type="ECO:0000256" key="4">
    <source>
        <dbReference type="SAM" id="MobiDB-lite"/>
    </source>
</evidence>
<evidence type="ECO:0000305" key="5"/>
<proteinExistence type="inferred from homology"/>
<gene>
    <name type="primary">TRM13</name>
    <name type="ordered locus">ADL163W</name>
</gene>
<organism>
    <name type="scientific">Eremothecium gossypii (strain ATCC 10895 / CBS 109.51 / FGSC 9923 / NRRL Y-1056)</name>
    <name type="common">Yeast</name>
    <name type="synonym">Ashbya gossypii</name>
    <dbReference type="NCBI Taxonomy" id="284811"/>
    <lineage>
        <taxon>Eukaryota</taxon>
        <taxon>Fungi</taxon>
        <taxon>Dikarya</taxon>
        <taxon>Ascomycota</taxon>
        <taxon>Saccharomycotina</taxon>
        <taxon>Saccharomycetes</taxon>
        <taxon>Saccharomycetales</taxon>
        <taxon>Saccharomycetaceae</taxon>
        <taxon>Eremothecium</taxon>
    </lineage>
</organism>
<reference key="1">
    <citation type="journal article" date="2004" name="Science">
        <title>The Ashbya gossypii genome as a tool for mapping the ancient Saccharomyces cerevisiae genome.</title>
        <authorList>
            <person name="Dietrich F.S."/>
            <person name="Voegeli S."/>
            <person name="Brachat S."/>
            <person name="Lerch A."/>
            <person name="Gates K."/>
            <person name="Steiner S."/>
            <person name="Mohr C."/>
            <person name="Poehlmann R."/>
            <person name="Luedi P."/>
            <person name="Choi S."/>
            <person name="Wing R.A."/>
            <person name="Flavier A."/>
            <person name="Gaffney T.D."/>
            <person name="Philippsen P."/>
        </authorList>
    </citation>
    <scope>NUCLEOTIDE SEQUENCE [LARGE SCALE GENOMIC DNA]</scope>
    <source>
        <strain>ATCC 10895 / CBS 109.51 / FGSC 9923 / NRRL Y-1056</strain>
    </source>
</reference>
<reference key="2">
    <citation type="journal article" date="2013" name="G3 (Bethesda)">
        <title>Genomes of Ashbya fungi isolated from insects reveal four mating-type loci, numerous translocations, lack of transposons, and distinct gene duplications.</title>
        <authorList>
            <person name="Dietrich F.S."/>
            <person name="Voegeli S."/>
            <person name="Kuo S."/>
            <person name="Philippsen P."/>
        </authorList>
    </citation>
    <scope>GENOME REANNOTATION</scope>
    <scope>SEQUENCE REVISION TO 253; 279; 281 AND 285</scope>
    <source>
        <strain>ATCC 10895 / CBS 109.51 / FGSC 9923 / NRRL Y-1056</strain>
    </source>
</reference>